<accession>O85072</accession>
<organism>
    <name type="scientific">Buchnera aphidicola subsp. Diuraphis noxia</name>
    <dbReference type="NCBI Taxonomy" id="118101"/>
    <lineage>
        <taxon>Bacteria</taxon>
        <taxon>Pseudomonadati</taxon>
        <taxon>Pseudomonadota</taxon>
        <taxon>Gammaproteobacteria</taxon>
        <taxon>Enterobacterales</taxon>
        <taxon>Erwiniaceae</taxon>
        <taxon>Buchnera</taxon>
    </lineage>
</organism>
<name>LEUC_BUCDN</name>
<comment type="function">
    <text evidence="1">Catalyzes the isomerization between 2-isopropylmalate and 3-isopropylmalate, via the formation of 2-isopropylmaleate.</text>
</comment>
<comment type="catalytic activity">
    <reaction evidence="1">
        <text>(2R,3S)-3-isopropylmalate = (2S)-2-isopropylmalate</text>
        <dbReference type="Rhea" id="RHEA:32287"/>
        <dbReference type="ChEBI" id="CHEBI:1178"/>
        <dbReference type="ChEBI" id="CHEBI:35121"/>
        <dbReference type="EC" id="4.2.1.33"/>
    </reaction>
</comment>
<comment type="cofactor">
    <cofactor evidence="1">
        <name>[4Fe-4S] cluster</name>
        <dbReference type="ChEBI" id="CHEBI:49883"/>
    </cofactor>
    <text evidence="1">Binds 1 [4Fe-4S] cluster per subunit.</text>
</comment>
<comment type="pathway">
    <text evidence="1">Amino-acid biosynthesis; L-leucine biosynthesis; L-leucine from 3-methyl-2-oxobutanoate: step 2/4.</text>
</comment>
<comment type="subunit">
    <text evidence="1">Heterodimer of LeuC and LeuD.</text>
</comment>
<comment type="similarity">
    <text evidence="1">Belongs to the aconitase/IPM isomerase family. LeuC type 1 subfamily.</text>
</comment>
<reference key="1">
    <citation type="journal article" date="1999" name="J. Mol. Evol.">
        <title>Genetic characterization of plasmids containing genes encoding enzymes of leucine biosynthesis in endosymbionts (Buchnera) of aphids.</title>
        <authorList>
            <person name="Baumann L."/>
            <person name="Baumann P."/>
            <person name="Moran N.A."/>
            <person name="Sandstroem J.P."/>
            <person name="Thao M.L."/>
        </authorList>
    </citation>
    <scope>NUCLEOTIDE SEQUENCE [GENOMIC DNA]</scope>
</reference>
<protein>
    <recommendedName>
        <fullName evidence="1">3-isopropylmalate dehydratase large subunit</fullName>
        <ecNumber evidence="1">4.2.1.33</ecNumber>
    </recommendedName>
    <alternativeName>
        <fullName evidence="1">Alpha-IPM isomerase</fullName>
        <shortName evidence="1">IPMI</shortName>
    </alternativeName>
    <alternativeName>
        <fullName evidence="1">Isopropylmalate isomerase</fullName>
    </alternativeName>
</protein>
<proteinExistence type="inferred from homology"/>
<keyword id="KW-0004">4Fe-4S</keyword>
<keyword id="KW-0028">Amino-acid biosynthesis</keyword>
<keyword id="KW-0100">Branched-chain amino acid biosynthesis</keyword>
<keyword id="KW-0408">Iron</keyword>
<keyword id="KW-0411">Iron-sulfur</keyword>
<keyword id="KW-0432">Leucine biosynthesis</keyword>
<keyword id="KW-0456">Lyase</keyword>
<keyword id="KW-0479">Metal-binding</keyword>
<keyword id="KW-0614">Plasmid</keyword>
<dbReference type="EC" id="4.2.1.33" evidence="1"/>
<dbReference type="EMBL" id="AF041837">
    <property type="protein sequence ID" value="AAD12602.1"/>
    <property type="molecule type" value="Genomic_DNA"/>
</dbReference>
<dbReference type="RefSeq" id="NP_047189.1">
    <property type="nucleotide sequence ID" value="NC_001911.1"/>
</dbReference>
<dbReference type="SMR" id="O85072"/>
<dbReference type="UniPathway" id="UPA00048">
    <property type="reaction ID" value="UER00071"/>
</dbReference>
<dbReference type="GO" id="GO:0003861">
    <property type="term" value="F:3-isopropylmalate dehydratase activity"/>
    <property type="evidence" value="ECO:0007669"/>
    <property type="project" value="UniProtKB-UniRule"/>
</dbReference>
<dbReference type="GO" id="GO:0051539">
    <property type="term" value="F:4 iron, 4 sulfur cluster binding"/>
    <property type="evidence" value="ECO:0007669"/>
    <property type="project" value="UniProtKB-KW"/>
</dbReference>
<dbReference type="GO" id="GO:0046872">
    <property type="term" value="F:metal ion binding"/>
    <property type="evidence" value="ECO:0007669"/>
    <property type="project" value="UniProtKB-KW"/>
</dbReference>
<dbReference type="GO" id="GO:0009098">
    <property type="term" value="P:L-leucine biosynthetic process"/>
    <property type="evidence" value="ECO:0007669"/>
    <property type="project" value="UniProtKB-UniRule"/>
</dbReference>
<dbReference type="CDD" id="cd01583">
    <property type="entry name" value="IPMI"/>
    <property type="match status" value="1"/>
</dbReference>
<dbReference type="FunFam" id="3.30.499.10:FF:000006">
    <property type="entry name" value="3-isopropylmalate dehydratase large subunit"/>
    <property type="match status" value="1"/>
</dbReference>
<dbReference type="FunFam" id="3.30.499.10:FF:000007">
    <property type="entry name" value="3-isopropylmalate dehydratase large subunit"/>
    <property type="match status" value="1"/>
</dbReference>
<dbReference type="Gene3D" id="3.30.499.10">
    <property type="entry name" value="Aconitase, domain 3"/>
    <property type="match status" value="2"/>
</dbReference>
<dbReference type="HAMAP" id="MF_01026">
    <property type="entry name" value="LeuC_type1"/>
    <property type="match status" value="1"/>
</dbReference>
<dbReference type="InterPro" id="IPR004430">
    <property type="entry name" value="3-IsopropMal_deHydase_lsu"/>
</dbReference>
<dbReference type="InterPro" id="IPR015931">
    <property type="entry name" value="Acnase/IPM_dHydase_lsu_aba_1/3"/>
</dbReference>
<dbReference type="InterPro" id="IPR001030">
    <property type="entry name" value="Acoase/IPM_deHydtase_lsu_aba"/>
</dbReference>
<dbReference type="InterPro" id="IPR018136">
    <property type="entry name" value="Aconitase_4Fe-4S_BS"/>
</dbReference>
<dbReference type="InterPro" id="IPR036008">
    <property type="entry name" value="Aconitase_4Fe-4S_dom"/>
</dbReference>
<dbReference type="InterPro" id="IPR050067">
    <property type="entry name" value="IPM_dehydratase_rel_enz"/>
</dbReference>
<dbReference type="InterPro" id="IPR033941">
    <property type="entry name" value="IPMI_cat"/>
</dbReference>
<dbReference type="NCBIfam" id="TIGR00170">
    <property type="entry name" value="leuC"/>
    <property type="match status" value="1"/>
</dbReference>
<dbReference type="NCBIfam" id="NF004016">
    <property type="entry name" value="PRK05478.1"/>
    <property type="match status" value="1"/>
</dbReference>
<dbReference type="NCBIfam" id="NF009116">
    <property type="entry name" value="PRK12466.1"/>
    <property type="match status" value="1"/>
</dbReference>
<dbReference type="PANTHER" id="PTHR43822:SF9">
    <property type="entry name" value="3-ISOPROPYLMALATE DEHYDRATASE"/>
    <property type="match status" value="1"/>
</dbReference>
<dbReference type="PANTHER" id="PTHR43822">
    <property type="entry name" value="HOMOACONITASE, MITOCHONDRIAL-RELATED"/>
    <property type="match status" value="1"/>
</dbReference>
<dbReference type="Pfam" id="PF00330">
    <property type="entry name" value="Aconitase"/>
    <property type="match status" value="1"/>
</dbReference>
<dbReference type="PRINTS" id="PR00415">
    <property type="entry name" value="ACONITASE"/>
</dbReference>
<dbReference type="SUPFAM" id="SSF53732">
    <property type="entry name" value="Aconitase iron-sulfur domain"/>
    <property type="match status" value="1"/>
</dbReference>
<dbReference type="PROSITE" id="PS00450">
    <property type="entry name" value="ACONITASE_1"/>
    <property type="match status" value="1"/>
</dbReference>
<dbReference type="PROSITE" id="PS01244">
    <property type="entry name" value="ACONITASE_2"/>
    <property type="match status" value="1"/>
</dbReference>
<sequence>MNKTLYEKIYDSHVVHSEKNGLSILYVDLHLLHEVTSPQAFESLRIKDRTVRQPKKTFATMDHNVSTESKDINASGSMAKIQMQQLIKNCKEFHISLYDLNHPNQGIVHVISPEQGMTLPGMVIVCGDSHTSTHGAFGALSFGIGTSEVEHVLATQTLKQQRFKNMKIEVIGKIGNFITAKDVILYIIGKIGSSAGTGYIIEFCGNVIKKMSMEERMTVCNMAIELGAKSGLIAPDETTYLYLKNKTYSPHGRNWQKAIEYWKTLKTDHNAIFDKVFTIDISNILPQVTWGTNPDQVIGINEKIPDFTSFQNIVKKDLAKSACKYMDLKPGTYLTDITIDKVFIGSCTNSRIEDLRSASKILKHNKISKNVKAIVVPGSGLVKRQAESEGLDKIFIEAGFEWRLPGCSMCLGMNNDRLSENERCASTSNRNFEGRQGRNGRTHLVSPIMAALAALYGKFSNPNKLN</sequence>
<geneLocation type="plasmid">
    <name>pLeu-Dn</name>
    <name>pBDn1</name>
</geneLocation>
<feature type="chain" id="PRO_0000076717" description="3-isopropylmalate dehydratase large subunit">
    <location>
        <begin position="1"/>
        <end position="466"/>
    </location>
</feature>
<feature type="binding site" evidence="1">
    <location>
        <position position="347"/>
    </location>
    <ligand>
        <name>[4Fe-4S] cluster</name>
        <dbReference type="ChEBI" id="CHEBI:49883"/>
    </ligand>
</feature>
<feature type="binding site" evidence="1">
    <location>
        <position position="407"/>
    </location>
    <ligand>
        <name>[4Fe-4S] cluster</name>
        <dbReference type="ChEBI" id="CHEBI:49883"/>
    </ligand>
</feature>
<feature type="binding site" evidence="1">
    <location>
        <position position="410"/>
    </location>
    <ligand>
        <name>[4Fe-4S] cluster</name>
        <dbReference type="ChEBI" id="CHEBI:49883"/>
    </ligand>
</feature>
<evidence type="ECO:0000255" key="1">
    <source>
        <dbReference type="HAMAP-Rule" id="MF_01026"/>
    </source>
</evidence>
<gene>
    <name evidence="1" type="primary">leuC</name>
</gene>